<sequence>MSDQKAITSEQEMKAYRVQGFTCANCAGKFEKNVKQLSGVEDAKVNFGASKIAVYGNATIEELEKAGAFENLKVTPEKSARQASQEVKEDTKEDKVPFYKKHSTLLYASLLIAFGYLSSYVNGEENIVTTLLFLASMFIGGLSLFKVGLQNLLRFEFDMKTLMTVAVIGGAIIGEWAEVAIVVILFAISEALERFSMDRARQSIRSLMDIAPKEALVKRNGQEIMIHVDDIAVGDIMIVKPGQKIAMDGVVVSGYSAVNQAAITGESVPVEKTVDNEVFAGTLNEEGLLEVEITKLVEDTTISKIIHLVEEAQGERAPSQAFVDKFAKYYTPIIMIIAALVAIVPPLFFDGSWETWIYQGLAVLVVGCPCALVISTPISIVSAIGNAAKKGVLVKGGVYLEEMGALKAIAFDKTGTLTKGVPAVTDYNVLNKQINEKELLSIITALEYRSQHPLASAIMKKAEEENITYSDVQVEDFSSITGKGIKGIVNGTTYYIGSPKLFKELLTNDFDKDLEQNVTTLQNQGKTAMIIGTEKEILAVIAVADEVRESSKEILQKLHQLGIKKTIMLTGDNKGTANAIGGQVGVSDIEAELMPQDKLDFIKQLRSEYGNVAMVGDGVNDAPALAASTVGIAMGGAGTDTALETADVALMGDDLRKLPFTVKLSRKTLNIIKANITFAIAIKFIALLLVIPGWLTLWIAILSDMGATLLVALNGLRLMRVKE</sequence>
<proteinExistence type="inferred from homology"/>
<protein>
    <recommendedName>
        <fullName evidence="4">Probable cadmium-transporting ATPase</fullName>
        <ecNumber evidence="1">7.2.2.21</ecNumber>
    </recommendedName>
    <alternativeName>
        <fullName evidence="1">Cadmium-efflux ATPase</fullName>
    </alternativeName>
</protein>
<comment type="function">
    <text evidence="1">Couples the hydrolysis of ATP with the export of cadmium.</text>
</comment>
<comment type="catalytic activity">
    <reaction evidence="1">
        <text>Cd(2+)(in) + ATP + H2O = Cd(2+)(out) + ADP + phosphate + H(+)</text>
        <dbReference type="Rhea" id="RHEA:12132"/>
        <dbReference type="ChEBI" id="CHEBI:15377"/>
        <dbReference type="ChEBI" id="CHEBI:15378"/>
        <dbReference type="ChEBI" id="CHEBI:30616"/>
        <dbReference type="ChEBI" id="CHEBI:43474"/>
        <dbReference type="ChEBI" id="CHEBI:48775"/>
        <dbReference type="ChEBI" id="CHEBI:456216"/>
        <dbReference type="EC" id="7.2.2.21"/>
    </reaction>
</comment>
<comment type="subcellular location">
    <subcellularLocation>
        <location evidence="1">Cell membrane</location>
        <topology evidence="2">Multi-pass membrane protein</topology>
    </subcellularLocation>
</comment>
<comment type="similarity">
    <text evidence="4">Belongs to the cation transport ATPase (P-type) (TC 3.A.3) family. Type IB subfamily.</text>
</comment>
<name>CADA_ALKPO</name>
<accession>P30336</accession>
<accession>D3G1Y6</accession>
<geneLocation type="plasmid">
    <name>pBpOF4-02</name>
</geneLocation>
<organism>
    <name type="scientific">Alkalihalophilus pseudofirmus (strain ATCC BAA-2126 / JCM 17055 / OF4)</name>
    <name type="common">Bacillus pseudofirmus</name>
    <dbReference type="NCBI Taxonomy" id="398511"/>
    <lineage>
        <taxon>Bacteria</taxon>
        <taxon>Bacillati</taxon>
        <taxon>Bacillota</taxon>
        <taxon>Bacilli</taxon>
        <taxon>Bacillales</taxon>
        <taxon>Bacillaceae</taxon>
        <taxon>Alkalihalophilus</taxon>
    </lineage>
</organism>
<evidence type="ECO:0000250" key="1">
    <source>
        <dbReference type="UniProtKB" id="P20021"/>
    </source>
</evidence>
<evidence type="ECO:0000255" key="2"/>
<evidence type="ECO:0000255" key="3">
    <source>
        <dbReference type="PROSITE-ProRule" id="PRU00280"/>
    </source>
</evidence>
<evidence type="ECO:0000305" key="4"/>
<dbReference type="EC" id="7.2.2.21" evidence="1"/>
<dbReference type="EMBL" id="M90750">
    <property type="protein sequence ID" value="AAA22858.1"/>
    <property type="molecule type" value="Genomic_DNA"/>
</dbReference>
<dbReference type="EMBL" id="CP001880">
    <property type="protein sequence ID" value="ADC52362.1"/>
    <property type="molecule type" value="Genomic_DNA"/>
</dbReference>
<dbReference type="PIR" id="D42707">
    <property type="entry name" value="D42707"/>
</dbReference>
<dbReference type="RefSeq" id="WP_012961265.1">
    <property type="nucleotide sequence ID" value="NC_013793.1"/>
</dbReference>
<dbReference type="SMR" id="P30336"/>
<dbReference type="KEGG" id="bpf:BpOF4_21834"/>
<dbReference type="HOGENOM" id="CLU_001771_6_4_9"/>
<dbReference type="Proteomes" id="UP000001544">
    <property type="component" value="Plasmid pBpOF4-02"/>
</dbReference>
<dbReference type="GO" id="GO:0005886">
    <property type="term" value="C:plasma membrane"/>
    <property type="evidence" value="ECO:0007669"/>
    <property type="project" value="UniProtKB-SubCell"/>
</dbReference>
<dbReference type="GO" id="GO:0005524">
    <property type="term" value="F:ATP binding"/>
    <property type="evidence" value="ECO:0007669"/>
    <property type="project" value="UniProtKB-KW"/>
</dbReference>
<dbReference type="GO" id="GO:0016887">
    <property type="term" value="F:ATP hydrolysis activity"/>
    <property type="evidence" value="ECO:0007669"/>
    <property type="project" value="InterPro"/>
</dbReference>
<dbReference type="GO" id="GO:0046872">
    <property type="term" value="F:metal ion binding"/>
    <property type="evidence" value="ECO:0007669"/>
    <property type="project" value="UniProtKB-KW"/>
</dbReference>
<dbReference type="GO" id="GO:0008551">
    <property type="term" value="F:P-type cadmium transporter activity"/>
    <property type="evidence" value="ECO:0007669"/>
    <property type="project" value="UniProtKB-EC"/>
</dbReference>
<dbReference type="GO" id="GO:0046686">
    <property type="term" value="P:response to cadmium ion"/>
    <property type="evidence" value="ECO:0007669"/>
    <property type="project" value="UniProtKB-KW"/>
</dbReference>
<dbReference type="CDD" id="cd00371">
    <property type="entry name" value="HMA"/>
    <property type="match status" value="1"/>
</dbReference>
<dbReference type="CDD" id="cd07545">
    <property type="entry name" value="P-type_ATPase_Cd-like"/>
    <property type="match status" value="1"/>
</dbReference>
<dbReference type="FunFam" id="2.70.150.10:FF:000002">
    <property type="entry name" value="Copper-transporting ATPase 1, putative"/>
    <property type="match status" value="1"/>
</dbReference>
<dbReference type="Gene3D" id="3.30.70.100">
    <property type="match status" value="1"/>
</dbReference>
<dbReference type="Gene3D" id="3.40.1110.10">
    <property type="entry name" value="Calcium-transporting ATPase, cytoplasmic domain N"/>
    <property type="match status" value="1"/>
</dbReference>
<dbReference type="Gene3D" id="2.70.150.10">
    <property type="entry name" value="Calcium-transporting ATPase, cytoplasmic transduction domain A"/>
    <property type="match status" value="1"/>
</dbReference>
<dbReference type="Gene3D" id="3.40.50.1000">
    <property type="entry name" value="HAD superfamily/HAD-like"/>
    <property type="match status" value="1"/>
</dbReference>
<dbReference type="InterPro" id="IPR023299">
    <property type="entry name" value="ATPase_P-typ_cyto_dom_N"/>
</dbReference>
<dbReference type="InterPro" id="IPR018303">
    <property type="entry name" value="ATPase_P-typ_P_site"/>
</dbReference>
<dbReference type="InterPro" id="IPR023298">
    <property type="entry name" value="ATPase_P-typ_TM_dom_sf"/>
</dbReference>
<dbReference type="InterPro" id="IPR008250">
    <property type="entry name" value="ATPase_P-typ_transduc_dom_A_sf"/>
</dbReference>
<dbReference type="InterPro" id="IPR051014">
    <property type="entry name" value="Cation_Transport_ATPase_IB"/>
</dbReference>
<dbReference type="InterPro" id="IPR036412">
    <property type="entry name" value="HAD-like_sf"/>
</dbReference>
<dbReference type="InterPro" id="IPR023214">
    <property type="entry name" value="HAD_sf"/>
</dbReference>
<dbReference type="InterPro" id="IPR017969">
    <property type="entry name" value="Heavy-metal-associated_CS"/>
</dbReference>
<dbReference type="InterPro" id="IPR006121">
    <property type="entry name" value="HMA_dom"/>
</dbReference>
<dbReference type="InterPro" id="IPR036163">
    <property type="entry name" value="HMA_dom_sf"/>
</dbReference>
<dbReference type="InterPro" id="IPR027256">
    <property type="entry name" value="P-typ_ATPase_IB"/>
</dbReference>
<dbReference type="InterPro" id="IPR001757">
    <property type="entry name" value="P_typ_ATPase"/>
</dbReference>
<dbReference type="InterPro" id="IPR044492">
    <property type="entry name" value="P_typ_ATPase_HD_dom"/>
</dbReference>
<dbReference type="NCBIfam" id="TIGR01511">
    <property type="entry name" value="ATPase-IB1_Cu"/>
    <property type="match status" value="1"/>
</dbReference>
<dbReference type="NCBIfam" id="TIGR01512">
    <property type="entry name" value="ATPase-IB2_Cd"/>
    <property type="match status" value="1"/>
</dbReference>
<dbReference type="NCBIfam" id="TIGR01525">
    <property type="entry name" value="ATPase-IB_hvy"/>
    <property type="match status" value="1"/>
</dbReference>
<dbReference type="NCBIfam" id="TIGR01494">
    <property type="entry name" value="ATPase_P-type"/>
    <property type="match status" value="1"/>
</dbReference>
<dbReference type="PANTHER" id="PTHR48085">
    <property type="entry name" value="CADMIUM/ZINC-TRANSPORTING ATPASE HMA2-RELATED"/>
    <property type="match status" value="1"/>
</dbReference>
<dbReference type="PANTHER" id="PTHR48085:SF5">
    <property type="entry name" value="CADMIUM_ZINC-TRANSPORTING ATPASE HMA4-RELATED"/>
    <property type="match status" value="1"/>
</dbReference>
<dbReference type="Pfam" id="PF00122">
    <property type="entry name" value="E1-E2_ATPase"/>
    <property type="match status" value="1"/>
</dbReference>
<dbReference type="Pfam" id="PF00403">
    <property type="entry name" value="HMA"/>
    <property type="match status" value="1"/>
</dbReference>
<dbReference type="Pfam" id="PF00702">
    <property type="entry name" value="Hydrolase"/>
    <property type="match status" value="1"/>
</dbReference>
<dbReference type="PRINTS" id="PR00119">
    <property type="entry name" value="CATATPASE"/>
</dbReference>
<dbReference type="PRINTS" id="PR00941">
    <property type="entry name" value="CDATPASE"/>
</dbReference>
<dbReference type="SFLD" id="SFLDS00003">
    <property type="entry name" value="Haloacid_Dehalogenase"/>
    <property type="match status" value="1"/>
</dbReference>
<dbReference type="SFLD" id="SFLDF00027">
    <property type="entry name" value="p-type_atpase"/>
    <property type="match status" value="1"/>
</dbReference>
<dbReference type="SUPFAM" id="SSF81653">
    <property type="entry name" value="Calcium ATPase, transduction domain A"/>
    <property type="match status" value="1"/>
</dbReference>
<dbReference type="SUPFAM" id="SSF81665">
    <property type="entry name" value="Calcium ATPase, transmembrane domain M"/>
    <property type="match status" value="1"/>
</dbReference>
<dbReference type="SUPFAM" id="SSF56784">
    <property type="entry name" value="HAD-like"/>
    <property type="match status" value="1"/>
</dbReference>
<dbReference type="SUPFAM" id="SSF55008">
    <property type="entry name" value="HMA, heavy metal-associated domain"/>
    <property type="match status" value="1"/>
</dbReference>
<dbReference type="PROSITE" id="PS00154">
    <property type="entry name" value="ATPASE_E1_E2"/>
    <property type="match status" value="1"/>
</dbReference>
<dbReference type="PROSITE" id="PS01047">
    <property type="entry name" value="HMA_1"/>
    <property type="match status" value="1"/>
</dbReference>
<dbReference type="PROSITE" id="PS50846">
    <property type="entry name" value="HMA_2"/>
    <property type="match status" value="1"/>
</dbReference>
<reference key="1">
    <citation type="journal article" date="1992" name="J. Bacteriol.">
        <title>The cadC gene product of alkaliphilic Bacillus firmus OF4 partially restores Na+ resistance to an Escherichia coli strain lacking an Na+/H+ antiporter (NhaA).</title>
        <authorList>
            <person name="Ivey D.M."/>
            <person name="Guffanti A.A."/>
            <person name="Shen Z."/>
            <person name="Kudyan N."/>
            <person name="Krulwich T.A."/>
        </authorList>
    </citation>
    <scope>NUCLEOTIDE SEQUENCE [GENOMIC DNA]</scope>
</reference>
<reference key="2">
    <citation type="journal article" date="2011" name="Environ. Microbiol.">
        <title>Genome of alkaliphilic Bacillus pseudofirmus OF4 reveals adaptations that support the ability to grow in an external pH range from 7.5 to 11.4.</title>
        <authorList>
            <person name="Janto B."/>
            <person name="Ahmed A."/>
            <person name="Ito M."/>
            <person name="Liu J."/>
            <person name="Hicks D.B."/>
            <person name="Pagni S."/>
            <person name="Fackelmayer O.J."/>
            <person name="Smith T.A."/>
            <person name="Earl J."/>
            <person name="Elbourne L.D."/>
            <person name="Hassan K."/>
            <person name="Paulsen I.T."/>
            <person name="Kolsto A.B."/>
            <person name="Tourasse N.J."/>
            <person name="Ehrlich G.D."/>
            <person name="Boissy R."/>
            <person name="Ivey D.M."/>
            <person name="Li G."/>
            <person name="Xue Y."/>
            <person name="Ma Y."/>
            <person name="Hu F.Z."/>
            <person name="Krulwich T.A."/>
        </authorList>
    </citation>
    <scope>NUCLEOTIDE SEQUENCE [LARGE SCALE GENOMIC DNA]</scope>
    <source>
        <strain>ATCC BAA-2126 / JCM 17055 / OF4</strain>
        <plasmid>pBpOF4-02</plasmid>
    </source>
</reference>
<keyword id="KW-0067">ATP-binding</keyword>
<keyword id="KW-0104">Cadmium</keyword>
<keyword id="KW-0105">Cadmium resistance</keyword>
<keyword id="KW-1003">Cell membrane</keyword>
<keyword id="KW-0406">Ion transport</keyword>
<keyword id="KW-0460">Magnesium</keyword>
<keyword id="KW-0472">Membrane</keyword>
<keyword id="KW-0479">Metal-binding</keyword>
<keyword id="KW-0547">Nucleotide-binding</keyword>
<keyword id="KW-0597">Phosphoprotein</keyword>
<keyword id="KW-0614">Plasmid</keyword>
<keyword id="KW-1185">Reference proteome</keyword>
<keyword id="KW-1278">Translocase</keyword>
<keyword id="KW-0812">Transmembrane</keyword>
<keyword id="KW-1133">Transmembrane helix</keyword>
<keyword id="KW-0813">Transport</keyword>
<gene>
    <name type="primary">cadA</name>
    <name type="ordered locus">BpOF4_21834</name>
</gene>
<feature type="chain" id="PRO_0000046245" description="Probable cadmium-transporting ATPase">
    <location>
        <begin position="1"/>
        <end position="723"/>
    </location>
</feature>
<feature type="transmembrane region" description="Helical" evidence="2">
    <location>
        <begin position="103"/>
        <end position="123"/>
    </location>
</feature>
<feature type="transmembrane region" description="Helical" evidence="2">
    <location>
        <begin position="127"/>
        <end position="147"/>
    </location>
</feature>
<feature type="transmembrane region" description="Helical" evidence="2">
    <location>
        <begin position="168"/>
        <end position="188"/>
    </location>
</feature>
<feature type="transmembrane region" description="Helical" evidence="2">
    <location>
        <begin position="329"/>
        <end position="349"/>
    </location>
</feature>
<feature type="transmembrane region" description="Helical" evidence="2">
    <location>
        <begin position="361"/>
        <end position="381"/>
    </location>
</feature>
<feature type="transmembrane region" description="Helical" evidence="2">
    <location>
        <begin position="671"/>
        <end position="690"/>
    </location>
</feature>
<feature type="transmembrane region" description="Helical" evidence="2">
    <location>
        <begin position="694"/>
        <end position="716"/>
    </location>
</feature>
<feature type="domain" description="HMA" evidence="3">
    <location>
        <begin position="12"/>
        <end position="75"/>
    </location>
</feature>
<feature type="active site" description="4-aspartylphosphate intermediate" evidence="4">
    <location>
        <position position="412"/>
    </location>
</feature>
<feature type="binding site" evidence="3">
    <location>
        <position position="23"/>
    </location>
    <ligand>
        <name>Cd(2+)</name>
        <dbReference type="ChEBI" id="CHEBI:48775"/>
    </ligand>
</feature>
<feature type="binding site" evidence="3">
    <location>
        <position position="26"/>
    </location>
    <ligand>
        <name>Cd(2+)</name>
        <dbReference type="ChEBI" id="CHEBI:48775"/>
    </ligand>
</feature>
<feature type="sequence conflict" description="In Ref. 1; AAA22858." evidence="4" ref="1">
    <original>A</original>
    <variation>T</variation>
    <location>
        <position position="113"/>
    </location>
</feature>
<feature type="sequence conflict" description="In Ref. 1; AAA22858." evidence="4" ref="1">
    <original>A</original>
    <variation>T</variation>
    <location>
        <position position="261"/>
    </location>
</feature>
<feature type="sequence conflict" description="In Ref. 1; AAA22858." evidence="4" ref="1">
    <original>A</original>
    <variation>T</variation>
    <location>
        <position position="339"/>
    </location>
</feature>
<feature type="sequence conflict" description="In Ref. 1; AAA22858." evidence="4" ref="1">
    <original>F</original>
    <variation>S</variation>
    <location>
        <position position="660"/>
    </location>
</feature>
<feature type="sequence conflict" description="In Ref. 1; AAA22858." evidence="4" ref="1">
    <original>L</original>
    <variation>S</variation>
    <location>
        <position position="687"/>
    </location>
</feature>